<protein>
    <recommendedName>
        <fullName evidence="1">Chaperone protein DnaJ</fullName>
    </recommendedName>
</protein>
<evidence type="ECO:0000255" key="1">
    <source>
        <dbReference type="HAMAP-Rule" id="MF_01152"/>
    </source>
</evidence>
<proteinExistence type="inferred from homology"/>
<dbReference type="EMBL" id="L43967">
    <property type="protein sequence ID" value="AAC71235.1"/>
    <property type="molecule type" value="Genomic_DNA"/>
</dbReference>
<dbReference type="EMBL" id="U01723">
    <property type="protein sequence ID" value="AAC43198.1"/>
    <property type="molecule type" value="Genomic_DNA"/>
</dbReference>
<dbReference type="PIR" id="A64202">
    <property type="entry name" value="A64202"/>
</dbReference>
<dbReference type="RefSeq" id="WP_009885921.1">
    <property type="nucleotide sequence ID" value="NC_000908.2"/>
</dbReference>
<dbReference type="SMR" id="P47265"/>
<dbReference type="FunCoup" id="P47265">
    <property type="interactions" value="200"/>
</dbReference>
<dbReference type="STRING" id="243273.MG_019"/>
<dbReference type="GeneID" id="88282134"/>
<dbReference type="KEGG" id="mge:MG_019"/>
<dbReference type="eggNOG" id="COG0484">
    <property type="taxonomic scope" value="Bacteria"/>
</dbReference>
<dbReference type="HOGENOM" id="CLU_017633_0_7_14"/>
<dbReference type="InParanoid" id="P47265"/>
<dbReference type="OrthoDB" id="9779889at2"/>
<dbReference type="BioCyc" id="MGEN243273:G1GJ2-19-MONOMER"/>
<dbReference type="Proteomes" id="UP000000807">
    <property type="component" value="Chromosome"/>
</dbReference>
<dbReference type="GO" id="GO:0005737">
    <property type="term" value="C:cytoplasm"/>
    <property type="evidence" value="ECO:0000318"/>
    <property type="project" value="GO_Central"/>
</dbReference>
<dbReference type="GO" id="GO:0005524">
    <property type="term" value="F:ATP binding"/>
    <property type="evidence" value="ECO:0007669"/>
    <property type="project" value="InterPro"/>
</dbReference>
<dbReference type="GO" id="GO:0031072">
    <property type="term" value="F:heat shock protein binding"/>
    <property type="evidence" value="ECO:0007669"/>
    <property type="project" value="InterPro"/>
</dbReference>
<dbReference type="GO" id="GO:0051082">
    <property type="term" value="F:unfolded protein binding"/>
    <property type="evidence" value="ECO:0000318"/>
    <property type="project" value="GO_Central"/>
</dbReference>
<dbReference type="GO" id="GO:0008270">
    <property type="term" value="F:zinc ion binding"/>
    <property type="evidence" value="ECO:0007669"/>
    <property type="project" value="UniProtKB-UniRule"/>
</dbReference>
<dbReference type="GO" id="GO:0051085">
    <property type="term" value="P:chaperone cofactor-dependent protein refolding"/>
    <property type="evidence" value="ECO:0000318"/>
    <property type="project" value="GO_Central"/>
</dbReference>
<dbReference type="GO" id="GO:0006260">
    <property type="term" value="P:DNA replication"/>
    <property type="evidence" value="ECO:0007669"/>
    <property type="project" value="UniProtKB-KW"/>
</dbReference>
<dbReference type="GO" id="GO:0042026">
    <property type="term" value="P:protein refolding"/>
    <property type="evidence" value="ECO:0000318"/>
    <property type="project" value="GO_Central"/>
</dbReference>
<dbReference type="GO" id="GO:0009408">
    <property type="term" value="P:response to heat"/>
    <property type="evidence" value="ECO:0007669"/>
    <property type="project" value="InterPro"/>
</dbReference>
<dbReference type="CDD" id="cd06257">
    <property type="entry name" value="DnaJ"/>
    <property type="match status" value="1"/>
</dbReference>
<dbReference type="CDD" id="cd10747">
    <property type="entry name" value="DnaJ_C"/>
    <property type="match status" value="1"/>
</dbReference>
<dbReference type="CDD" id="cd10719">
    <property type="entry name" value="DnaJ_zf"/>
    <property type="match status" value="1"/>
</dbReference>
<dbReference type="FunFam" id="2.10.230.10:FF:000002">
    <property type="entry name" value="Molecular chaperone DnaJ"/>
    <property type="match status" value="1"/>
</dbReference>
<dbReference type="Gene3D" id="1.10.287.110">
    <property type="entry name" value="DnaJ domain"/>
    <property type="match status" value="1"/>
</dbReference>
<dbReference type="Gene3D" id="2.10.230.10">
    <property type="entry name" value="Heat shock protein DnaJ, cysteine-rich domain"/>
    <property type="match status" value="1"/>
</dbReference>
<dbReference type="Gene3D" id="2.60.260.20">
    <property type="entry name" value="Urease metallochaperone UreE, N-terminal domain"/>
    <property type="match status" value="2"/>
</dbReference>
<dbReference type="HAMAP" id="MF_01152">
    <property type="entry name" value="DnaJ"/>
    <property type="match status" value="1"/>
</dbReference>
<dbReference type="InterPro" id="IPR012724">
    <property type="entry name" value="DnaJ"/>
</dbReference>
<dbReference type="InterPro" id="IPR002939">
    <property type="entry name" value="DnaJ_C"/>
</dbReference>
<dbReference type="InterPro" id="IPR001623">
    <property type="entry name" value="DnaJ_domain"/>
</dbReference>
<dbReference type="InterPro" id="IPR018253">
    <property type="entry name" value="DnaJ_domain_CS"/>
</dbReference>
<dbReference type="InterPro" id="IPR008971">
    <property type="entry name" value="HSP40/DnaJ_pept-bd"/>
</dbReference>
<dbReference type="InterPro" id="IPR001305">
    <property type="entry name" value="HSP_DnaJ_Cys-rich_dom"/>
</dbReference>
<dbReference type="InterPro" id="IPR036410">
    <property type="entry name" value="HSP_DnaJ_Cys-rich_dom_sf"/>
</dbReference>
<dbReference type="InterPro" id="IPR036869">
    <property type="entry name" value="J_dom_sf"/>
</dbReference>
<dbReference type="NCBIfam" id="TIGR02349">
    <property type="entry name" value="DnaJ_bact"/>
    <property type="match status" value="1"/>
</dbReference>
<dbReference type="PANTHER" id="PTHR43096:SF48">
    <property type="entry name" value="CHAPERONE PROTEIN DNAJ"/>
    <property type="match status" value="1"/>
</dbReference>
<dbReference type="PANTHER" id="PTHR43096">
    <property type="entry name" value="DNAJ HOMOLOG 1, MITOCHONDRIAL-RELATED"/>
    <property type="match status" value="1"/>
</dbReference>
<dbReference type="Pfam" id="PF00226">
    <property type="entry name" value="DnaJ"/>
    <property type="match status" value="1"/>
</dbReference>
<dbReference type="Pfam" id="PF01556">
    <property type="entry name" value="DnaJ_C"/>
    <property type="match status" value="1"/>
</dbReference>
<dbReference type="Pfam" id="PF00684">
    <property type="entry name" value="DnaJ_CXXCXGXG"/>
    <property type="match status" value="1"/>
</dbReference>
<dbReference type="PRINTS" id="PR00625">
    <property type="entry name" value="JDOMAIN"/>
</dbReference>
<dbReference type="SMART" id="SM00271">
    <property type="entry name" value="DnaJ"/>
    <property type="match status" value="1"/>
</dbReference>
<dbReference type="SUPFAM" id="SSF46565">
    <property type="entry name" value="Chaperone J-domain"/>
    <property type="match status" value="1"/>
</dbReference>
<dbReference type="SUPFAM" id="SSF57938">
    <property type="entry name" value="DnaJ/Hsp40 cysteine-rich domain"/>
    <property type="match status" value="1"/>
</dbReference>
<dbReference type="SUPFAM" id="SSF49493">
    <property type="entry name" value="HSP40/DnaJ peptide-binding domain"/>
    <property type="match status" value="2"/>
</dbReference>
<dbReference type="PROSITE" id="PS00636">
    <property type="entry name" value="DNAJ_1"/>
    <property type="match status" value="1"/>
</dbReference>
<dbReference type="PROSITE" id="PS50076">
    <property type="entry name" value="DNAJ_2"/>
    <property type="match status" value="1"/>
</dbReference>
<dbReference type="PROSITE" id="PS51188">
    <property type="entry name" value="ZF_CR"/>
    <property type="match status" value="1"/>
</dbReference>
<reference key="1">
    <citation type="journal article" date="1995" name="Science">
        <title>The minimal gene complement of Mycoplasma genitalium.</title>
        <authorList>
            <person name="Fraser C.M."/>
            <person name="Gocayne J.D."/>
            <person name="White O."/>
            <person name="Adams M.D."/>
            <person name="Clayton R.A."/>
            <person name="Fleischmann R.D."/>
            <person name="Bult C.J."/>
            <person name="Kerlavage A.R."/>
            <person name="Sutton G.G."/>
            <person name="Kelley J.M."/>
            <person name="Fritchman J.L."/>
            <person name="Weidman J.F."/>
            <person name="Small K.V."/>
            <person name="Sandusky M."/>
            <person name="Fuhrmann J.L."/>
            <person name="Nguyen D.T."/>
            <person name="Utterback T.R."/>
            <person name="Saudek D.M."/>
            <person name="Phillips C.A."/>
            <person name="Merrick J.M."/>
            <person name="Tomb J.-F."/>
            <person name="Dougherty B.A."/>
            <person name="Bott K.F."/>
            <person name="Hu P.-C."/>
            <person name="Lucier T.S."/>
            <person name="Peterson S.N."/>
            <person name="Smith H.O."/>
            <person name="Hutchison C.A. III"/>
            <person name="Venter J.C."/>
        </authorList>
    </citation>
    <scope>NUCLEOTIDE SEQUENCE [LARGE SCALE GENOMIC DNA]</scope>
    <source>
        <strain>ATCC 33530 / DSM 19775 / NCTC 10195 / G37</strain>
    </source>
</reference>
<reference key="2">
    <citation type="journal article" date="1993" name="J. Bacteriol.">
        <title>A survey of the Mycoplasma genitalium genome by using random sequencing.</title>
        <authorList>
            <person name="Peterson S.N."/>
            <person name="Hu P.-C."/>
            <person name="Bott K.F."/>
            <person name="Hutchison C.A. III"/>
        </authorList>
    </citation>
    <scope>NUCLEOTIDE SEQUENCE [GENOMIC DNA] OF 1-15</scope>
    <source>
        <strain>ATCC 33530 / DSM 19775 / NCTC 10195 / G37</strain>
    </source>
</reference>
<organism>
    <name type="scientific">Mycoplasma genitalium (strain ATCC 33530 / DSM 19775 / NCTC 10195 / G37)</name>
    <name type="common">Mycoplasmoides genitalium</name>
    <dbReference type="NCBI Taxonomy" id="243273"/>
    <lineage>
        <taxon>Bacteria</taxon>
        <taxon>Bacillati</taxon>
        <taxon>Mycoplasmatota</taxon>
        <taxon>Mycoplasmoidales</taxon>
        <taxon>Mycoplasmoidaceae</taxon>
        <taxon>Mycoplasmoides</taxon>
    </lineage>
</organism>
<comment type="function">
    <text evidence="1">Participates actively in the response to hyperosmotic and heat shock by preventing the aggregation of stress-denatured proteins and by disaggregating proteins, also in an autonomous, DnaK-independent fashion. Unfolded proteins bind initially to DnaJ; upon interaction with the DnaJ-bound protein, DnaK hydrolyzes its bound ATP, resulting in the formation of a stable complex. GrpE releases ADP from DnaK; ATP binding to DnaK triggers the release of the substrate protein, thus completing the reaction cycle. Several rounds of ATP-dependent interactions between DnaJ, DnaK and GrpE are required for fully efficient folding. Also involved, together with DnaK and GrpE, in the DNA replication of plasmids through activation of initiation proteins.</text>
</comment>
<comment type="cofactor">
    <cofactor evidence="1">
        <name>Zn(2+)</name>
        <dbReference type="ChEBI" id="CHEBI:29105"/>
    </cofactor>
    <text evidence="1">Binds 2 Zn(2+) ions per monomer.</text>
</comment>
<comment type="subunit">
    <text evidence="1">Homodimer.</text>
</comment>
<comment type="subcellular location">
    <subcellularLocation>
        <location evidence="1">Cytoplasm</location>
    </subcellularLocation>
</comment>
<comment type="domain">
    <text evidence="1">The J domain is necessary and sufficient to stimulate DnaK ATPase activity. Zinc center 1 plays an important role in the autonomous, DnaK-independent chaperone activity of DnaJ. Zinc center 2 is essential for interaction with DnaK and for DnaJ activity.</text>
</comment>
<comment type="similarity">
    <text evidence="1">Belongs to the DnaJ family.</text>
</comment>
<sequence>MAAGKRDYYEVLGISKNASSQDIKRAFRKLAMQYHPDRHKAENETTQKQNEEKFKEVNEAYEVLSDEEKRKLYDQFGHEGLNASGFHEAGFNPFDIFNSVFGEGFSFGMDGDSPFDFIFNRSKKRQQQIVVPYNLDIALVIEINFFEMTNGCNKTIKYERKVSCHSCNGFGAEGGESGLDLCKDCNGNGFVIKNQRSIFGTIQSQVLCSTCNGQGKQIKVKCKTCRSNKYTVTNQIKEINIPAGMYSGEALVDESGGNEFKGHYGKLIIQVNVLASKIFKRSDNNVIANVLVDPMVAIVGGVIELPTLEGIKEFNIRPGTKSGEQIVIPNGGIKFSKSFKRKAGDLIIIISYARPCEYTNLELKKLREFIKPNQEVKQYLNTLKNEYKT</sequence>
<gene>
    <name evidence="1" type="primary">dnaJ</name>
    <name type="ordered locus">MG019</name>
</gene>
<feature type="chain" id="PRO_0000070824" description="Chaperone protein DnaJ">
    <location>
        <begin position="1"/>
        <end position="389"/>
    </location>
</feature>
<feature type="domain" description="J" evidence="1">
    <location>
        <begin position="5"/>
        <end position="79"/>
    </location>
</feature>
<feature type="repeat" description="CXXCXGXG motif">
    <location>
        <begin position="164"/>
        <end position="171"/>
    </location>
</feature>
<feature type="repeat" description="CXXCXGXG motif">
    <location>
        <begin position="182"/>
        <end position="189"/>
    </location>
</feature>
<feature type="repeat" description="CXXCXGXG motif">
    <location>
        <begin position="208"/>
        <end position="215"/>
    </location>
</feature>
<feature type="repeat" description="CXXCXGXG motif">
    <location>
        <begin position="222"/>
        <end position="229"/>
    </location>
</feature>
<feature type="zinc finger region" description="CR-type" evidence="1">
    <location>
        <begin position="151"/>
        <end position="234"/>
    </location>
</feature>
<feature type="binding site" evidence="1">
    <location>
        <position position="164"/>
    </location>
    <ligand>
        <name>Zn(2+)</name>
        <dbReference type="ChEBI" id="CHEBI:29105"/>
        <label>1</label>
    </ligand>
</feature>
<feature type="binding site" evidence="1">
    <location>
        <position position="167"/>
    </location>
    <ligand>
        <name>Zn(2+)</name>
        <dbReference type="ChEBI" id="CHEBI:29105"/>
        <label>1</label>
    </ligand>
</feature>
<feature type="binding site" evidence="1">
    <location>
        <position position="182"/>
    </location>
    <ligand>
        <name>Zn(2+)</name>
        <dbReference type="ChEBI" id="CHEBI:29105"/>
        <label>2</label>
    </ligand>
</feature>
<feature type="binding site" evidence="1">
    <location>
        <position position="185"/>
    </location>
    <ligand>
        <name>Zn(2+)</name>
        <dbReference type="ChEBI" id="CHEBI:29105"/>
        <label>2</label>
    </ligand>
</feature>
<feature type="binding site" evidence="1">
    <location>
        <position position="208"/>
    </location>
    <ligand>
        <name>Zn(2+)</name>
        <dbReference type="ChEBI" id="CHEBI:29105"/>
        <label>2</label>
    </ligand>
</feature>
<feature type="binding site" evidence="1">
    <location>
        <position position="211"/>
    </location>
    <ligand>
        <name>Zn(2+)</name>
        <dbReference type="ChEBI" id="CHEBI:29105"/>
        <label>2</label>
    </ligand>
</feature>
<feature type="binding site" evidence="1">
    <location>
        <position position="222"/>
    </location>
    <ligand>
        <name>Zn(2+)</name>
        <dbReference type="ChEBI" id="CHEBI:29105"/>
        <label>1</label>
    </ligand>
</feature>
<feature type="binding site" evidence="1">
    <location>
        <position position="225"/>
    </location>
    <ligand>
        <name>Zn(2+)</name>
        <dbReference type="ChEBI" id="CHEBI:29105"/>
        <label>1</label>
    </ligand>
</feature>
<accession>P47265</accession>
<name>DNAJ_MYCGE</name>
<keyword id="KW-0143">Chaperone</keyword>
<keyword id="KW-0963">Cytoplasm</keyword>
<keyword id="KW-0235">DNA replication</keyword>
<keyword id="KW-0479">Metal-binding</keyword>
<keyword id="KW-1185">Reference proteome</keyword>
<keyword id="KW-0677">Repeat</keyword>
<keyword id="KW-0346">Stress response</keyword>
<keyword id="KW-0862">Zinc</keyword>
<keyword id="KW-0863">Zinc-finger</keyword>